<gene>
    <name evidence="10" type="primary">CBLIF</name>
    <name evidence="10" type="synonym">GIF</name>
    <name type="synonym">IFMH</name>
</gene>
<organism>
    <name type="scientific">Homo sapiens</name>
    <name type="common">Human</name>
    <dbReference type="NCBI Taxonomy" id="9606"/>
    <lineage>
        <taxon>Eukaryota</taxon>
        <taxon>Metazoa</taxon>
        <taxon>Chordata</taxon>
        <taxon>Craniata</taxon>
        <taxon>Vertebrata</taxon>
        <taxon>Euteleostomi</taxon>
        <taxon>Mammalia</taxon>
        <taxon>Eutheria</taxon>
        <taxon>Euarchontoglires</taxon>
        <taxon>Primates</taxon>
        <taxon>Haplorrhini</taxon>
        <taxon>Catarrhini</taxon>
        <taxon>Hominidae</taxon>
        <taxon>Homo</taxon>
    </lineage>
</organism>
<keyword id="KW-0002">3D-structure</keyword>
<keyword id="KW-0025">Alternative splicing</keyword>
<keyword id="KW-0170">Cobalt</keyword>
<keyword id="KW-0171">Cobalt transport</keyword>
<keyword id="KW-0225">Disease variant</keyword>
<keyword id="KW-1015">Disulfide bond</keyword>
<keyword id="KW-0325">Glycoprotein</keyword>
<keyword id="KW-0406">Ion transport</keyword>
<keyword id="KW-0597">Phosphoprotein</keyword>
<keyword id="KW-1267">Proteomics identification</keyword>
<keyword id="KW-1185">Reference proteome</keyword>
<keyword id="KW-0964">Secreted</keyword>
<keyword id="KW-0732">Signal</keyword>
<keyword id="KW-0813">Transport</keyword>
<accession>P27352</accession>
<accession>B2RAN8</accession>
<accession>B4DVZ1</accession>
<sequence length="417" mass="45416">MAWFALYLLSLLWATAGTSTQTQSSCSVPSAQEPLVNGIQVLMENSVTSSAYPNPSILIAMNLAGAYNLKAQKLLTYQLMSSDNNDLTIGQLGLTIMALTSSCRDPGDKVSILQRQMENWAPSSPNAEASAFYGPSLAILALCQKNSEATLPIAVRFAKTLLANSSPFNVDTGAMATLALTCMYNKIPVGSEEGYRSLFGQVLKDIVEKISMKIKDNGIIGDIYSTGLAMQALSVTPEPSKKEWNCKKTTDMILNEIKQGKFHNPMSIAQILPSLKGKTYLDVPQVTCSPDHEVQPTLPSNPGPGPTSASNITVIYTINNQLRGVELLFNETINVSVKSGSVLLVVLEEAQRKNPMFKFETTMTSWGLVVSSINNIAENVNHKTYWQFLSGVTPLNEGVADYIPFNHEHITANFTQY</sequence>
<dbReference type="EMBL" id="M63154">
    <property type="protein sequence ID" value="AAA66354.1"/>
    <property type="molecule type" value="mRNA"/>
</dbReference>
<dbReference type="EMBL" id="X76562">
    <property type="protein sequence ID" value="CAA54061.1"/>
    <property type="molecule type" value="mRNA"/>
</dbReference>
<dbReference type="EMBL" id="AK314275">
    <property type="protein sequence ID" value="BAG36935.1"/>
    <property type="molecule type" value="mRNA"/>
</dbReference>
<dbReference type="EMBL" id="AK301295">
    <property type="protein sequence ID" value="BAG62853.1"/>
    <property type="molecule type" value="mRNA"/>
</dbReference>
<dbReference type="EMBL" id="AP002347">
    <property type="status" value="NOT_ANNOTATED_CDS"/>
    <property type="molecule type" value="Genomic_DNA"/>
</dbReference>
<dbReference type="EMBL" id="BC037958">
    <property type="protein sequence ID" value="AAH37958.1"/>
    <property type="molecule type" value="mRNA"/>
</dbReference>
<dbReference type="CCDS" id="CCDS7977.1">
    <molecule id="P27352-1"/>
</dbReference>
<dbReference type="PIR" id="A39904">
    <property type="entry name" value="A39904"/>
</dbReference>
<dbReference type="RefSeq" id="NP_005133.2">
    <molecule id="P27352-1"/>
    <property type="nucleotide sequence ID" value="NM_005142.2"/>
</dbReference>
<dbReference type="PDB" id="2PMV">
    <property type="method" value="X-ray"/>
    <property type="resolution" value="2.60 A"/>
    <property type="chains" value="A/B/C/D=19-417"/>
</dbReference>
<dbReference type="PDB" id="3KQ4">
    <property type="method" value="X-ray"/>
    <property type="resolution" value="3.30 A"/>
    <property type="chains" value="A/C/E=25-417"/>
</dbReference>
<dbReference type="PDBsum" id="2PMV"/>
<dbReference type="PDBsum" id="3KQ4"/>
<dbReference type="SMR" id="P27352"/>
<dbReference type="BioGRID" id="108961">
    <property type="interactions" value="15"/>
</dbReference>
<dbReference type="CORUM" id="P27352"/>
<dbReference type="DIP" id="DIP-46206N"/>
<dbReference type="FunCoup" id="P27352">
    <property type="interactions" value="56"/>
</dbReference>
<dbReference type="IntAct" id="P27352">
    <property type="interactions" value="14"/>
</dbReference>
<dbReference type="MINT" id="P27352"/>
<dbReference type="STRING" id="9606.ENSP00000257248"/>
<dbReference type="DrugBank" id="DB00115">
    <property type="generic name" value="Cyanocobalamin"/>
</dbReference>
<dbReference type="GlyCosmos" id="P27352">
    <property type="glycosylation" value="4 sites, No reported glycans"/>
</dbReference>
<dbReference type="GlyGen" id="P27352">
    <property type="glycosylation" value="5 sites"/>
</dbReference>
<dbReference type="iPTMnet" id="P27352"/>
<dbReference type="PhosphoSitePlus" id="P27352"/>
<dbReference type="BioMuta" id="GIF"/>
<dbReference type="DMDM" id="62906845"/>
<dbReference type="MassIVE" id="P27352"/>
<dbReference type="PaxDb" id="9606-ENSP00000257248"/>
<dbReference type="PeptideAtlas" id="P27352"/>
<dbReference type="ProteomicsDB" id="54381">
    <molecule id="P27352-1"/>
</dbReference>
<dbReference type="ProteomicsDB" id="54382">
    <molecule id="P27352-2"/>
</dbReference>
<dbReference type="Antibodypedia" id="27824">
    <property type="antibodies" value="307 antibodies from 26 providers"/>
</dbReference>
<dbReference type="DNASU" id="2694"/>
<dbReference type="Ensembl" id="ENST00000257248.3">
    <molecule id="P27352-1"/>
    <property type="protein sequence ID" value="ENSP00000257248.2"/>
    <property type="gene ID" value="ENSG00000134812.8"/>
</dbReference>
<dbReference type="GeneID" id="2694"/>
<dbReference type="KEGG" id="hsa:2694"/>
<dbReference type="MANE-Select" id="ENST00000257248.3">
    <property type="protein sequence ID" value="ENSP00000257248.2"/>
    <property type="RefSeq nucleotide sequence ID" value="NM_005142.3"/>
    <property type="RefSeq protein sequence ID" value="NP_005133.2"/>
</dbReference>
<dbReference type="UCSC" id="uc001noi.4">
    <molecule id="P27352-1"/>
    <property type="organism name" value="human"/>
</dbReference>
<dbReference type="AGR" id="HGNC:4268"/>
<dbReference type="CTD" id="2694"/>
<dbReference type="DisGeNET" id="2694"/>
<dbReference type="GeneCards" id="CBLIF"/>
<dbReference type="HGNC" id="HGNC:4268">
    <property type="gene designation" value="CBLIF"/>
</dbReference>
<dbReference type="HPA" id="ENSG00000134812">
    <property type="expression patterns" value="Tissue enriched (stomach)"/>
</dbReference>
<dbReference type="MalaCards" id="CBLIF"/>
<dbReference type="MIM" id="261000">
    <property type="type" value="phenotype"/>
</dbReference>
<dbReference type="MIM" id="609342">
    <property type="type" value="gene"/>
</dbReference>
<dbReference type="neXtProt" id="NX_P27352"/>
<dbReference type="OpenTargets" id="ENSG00000134812"/>
<dbReference type="Orphanet" id="332">
    <property type="disease" value="Congenital intrinsic factor deficiency"/>
</dbReference>
<dbReference type="PharmGKB" id="PA28678"/>
<dbReference type="VEuPathDB" id="HostDB:ENSG00000134812"/>
<dbReference type="eggNOG" id="ENOG502RXIA">
    <property type="taxonomic scope" value="Eukaryota"/>
</dbReference>
<dbReference type="GeneTree" id="ENSGT00530000063370"/>
<dbReference type="HOGENOM" id="CLU_052188_2_0_1"/>
<dbReference type="InParanoid" id="P27352"/>
<dbReference type="OMA" id="AYNVEAQ"/>
<dbReference type="OrthoDB" id="6343110at2759"/>
<dbReference type="PAN-GO" id="P27352">
    <property type="GO annotations" value="3 GO annotations based on evolutionary models"/>
</dbReference>
<dbReference type="PhylomeDB" id="P27352"/>
<dbReference type="TreeFam" id="TF333092"/>
<dbReference type="PathwayCommons" id="P27352"/>
<dbReference type="Reactome" id="R-HSA-3359457">
    <property type="pathway name" value="Defective CBLIF causes IFD"/>
</dbReference>
<dbReference type="Reactome" id="R-HSA-3359462">
    <property type="pathway name" value="Defective AMN causes MGA1"/>
</dbReference>
<dbReference type="Reactome" id="R-HSA-3359463">
    <property type="pathway name" value="Defective CUBN causes MGA1"/>
</dbReference>
<dbReference type="Reactome" id="R-HSA-9758881">
    <property type="pathway name" value="Uptake of dietary cobalamins into enterocytes"/>
</dbReference>
<dbReference type="SignaLink" id="P27352"/>
<dbReference type="BioGRID-ORCS" id="2694">
    <property type="hits" value="12 hits in 1131 CRISPR screens"/>
</dbReference>
<dbReference type="ChiTaRS" id="GIF">
    <property type="organism name" value="human"/>
</dbReference>
<dbReference type="EvolutionaryTrace" id="P27352"/>
<dbReference type="GeneWiki" id="Intrinsic_factor"/>
<dbReference type="GenomeRNAi" id="2694"/>
<dbReference type="Pharos" id="P27352">
    <property type="development level" value="Tbio"/>
</dbReference>
<dbReference type="PRO" id="PR:P27352"/>
<dbReference type="Proteomes" id="UP000005640">
    <property type="component" value="Chromosome 11"/>
</dbReference>
<dbReference type="RNAct" id="P27352">
    <property type="molecule type" value="protein"/>
</dbReference>
<dbReference type="Bgee" id="ENSG00000134812">
    <property type="expression patterns" value="Expressed in cardia of stomach and 115 other cell types or tissues"/>
</dbReference>
<dbReference type="ExpressionAtlas" id="P27352">
    <property type="expression patterns" value="baseline and differential"/>
</dbReference>
<dbReference type="GO" id="GO:0016324">
    <property type="term" value="C:apical plasma membrane"/>
    <property type="evidence" value="ECO:0000314"/>
    <property type="project" value="UniProtKB"/>
</dbReference>
<dbReference type="GO" id="GO:0005768">
    <property type="term" value="C:endosome"/>
    <property type="evidence" value="ECO:0000314"/>
    <property type="project" value="UniProtKB"/>
</dbReference>
<dbReference type="GO" id="GO:0005576">
    <property type="term" value="C:extracellular region"/>
    <property type="evidence" value="ECO:0000304"/>
    <property type="project" value="Reactome"/>
</dbReference>
<dbReference type="GO" id="GO:0005615">
    <property type="term" value="C:extracellular space"/>
    <property type="evidence" value="ECO:0000314"/>
    <property type="project" value="UniProtKB"/>
</dbReference>
<dbReference type="GO" id="GO:0043202">
    <property type="term" value="C:lysosomal lumen"/>
    <property type="evidence" value="ECO:0000304"/>
    <property type="project" value="Reactome"/>
</dbReference>
<dbReference type="GO" id="GO:0005902">
    <property type="term" value="C:microvillus"/>
    <property type="evidence" value="ECO:0000314"/>
    <property type="project" value="UniProtKB"/>
</dbReference>
<dbReference type="GO" id="GO:0140355">
    <property type="term" value="F:cargo receptor ligand activity"/>
    <property type="evidence" value="ECO:0000269"/>
    <property type="project" value="Reactome"/>
</dbReference>
<dbReference type="GO" id="GO:0031419">
    <property type="term" value="F:cobalamin binding"/>
    <property type="evidence" value="ECO:0000314"/>
    <property type="project" value="UniProtKB"/>
</dbReference>
<dbReference type="GO" id="GO:0140104">
    <property type="term" value="F:molecular carrier activity"/>
    <property type="evidence" value="ECO:0007669"/>
    <property type="project" value="Ensembl"/>
</dbReference>
<dbReference type="GO" id="GO:0015889">
    <property type="term" value="P:cobalamin transport"/>
    <property type="evidence" value="ECO:0000315"/>
    <property type="project" value="UniProtKB"/>
</dbReference>
<dbReference type="GO" id="GO:0006824">
    <property type="term" value="P:cobalt ion transport"/>
    <property type="evidence" value="ECO:0007669"/>
    <property type="project" value="UniProtKB-KW"/>
</dbReference>
<dbReference type="FunFam" id="1.50.10.20:FF:000016">
    <property type="entry name" value="Cobalamin binding intrinsic factor"/>
    <property type="match status" value="1"/>
</dbReference>
<dbReference type="FunFam" id="2.170.130.30:FF:000001">
    <property type="entry name" value="Cobalamin binding intrinsic factor"/>
    <property type="match status" value="1"/>
</dbReference>
<dbReference type="Gene3D" id="1.50.10.20">
    <property type="match status" value="1"/>
</dbReference>
<dbReference type="Gene3D" id="2.170.130.30">
    <property type="match status" value="1"/>
</dbReference>
<dbReference type="InterPro" id="IPR002157">
    <property type="entry name" value="Cbl-bd_prot"/>
</dbReference>
<dbReference type="InterPro" id="IPR051588">
    <property type="entry name" value="Cobalamin_Transport"/>
</dbReference>
<dbReference type="PANTHER" id="PTHR10559:SF15">
    <property type="entry name" value="COBALAMIN BINDING INTRINSIC FACTOR"/>
    <property type="match status" value="1"/>
</dbReference>
<dbReference type="PANTHER" id="PTHR10559">
    <property type="entry name" value="TRANSCOBALAMIN-1/GASTRIC INTRINSIC FACTOR"/>
    <property type="match status" value="1"/>
</dbReference>
<dbReference type="Pfam" id="PF01122">
    <property type="entry name" value="Cobalamin_bind"/>
    <property type="match status" value="1"/>
</dbReference>
<dbReference type="PROSITE" id="PS00468">
    <property type="entry name" value="COBALAMIN_BINDING"/>
    <property type="match status" value="1"/>
</dbReference>
<proteinExistence type="evidence at protein level"/>
<protein>
    <recommendedName>
        <fullName evidence="9">Cobalamin binding intrinsic factor</fullName>
    </recommendedName>
    <alternativeName>
        <fullName evidence="8">Gastric intrinsic factor</fullName>
    </alternativeName>
    <alternativeName>
        <fullName>Intrinsic factor</fullName>
        <shortName>IF</shortName>
        <shortName>INF</shortName>
    </alternativeName>
</protein>
<comment type="function">
    <text>Promotes absorption of the essential vitamin cobalamin (Cbl) in the ileum. After interaction with CUBN, the CBLIF-cobalamin complex is internalized via receptor-mediated endocytosis.</text>
</comment>
<comment type="subunit">
    <text evidence="5 6">Interacts with CUBN (via CUB domains).</text>
</comment>
<comment type="interaction">
    <interactant intactId="EBI-3953638">
        <id>P27352</id>
    </interactant>
    <interactant intactId="EBI-3953632">
        <id>O60494</id>
        <label>CUBN</label>
    </interactant>
    <organismsDiffer>false</organismsDiffer>
    <experiments>2</experiments>
</comment>
<comment type="interaction">
    <interactant intactId="EBI-3953638">
        <id>P27352</id>
    </interactant>
    <interactant intactId="EBI-2833872">
        <id>O15552</id>
        <label>FFAR2</label>
    </interactant>
    <organismsDiffer>false</organismsDiffer>
    <experiments>3</experiments>
</comment>
<comment type="interaction">
    <interactant intactId="EBI-3953638">
        <id>P27352</id>
    </interactant>
    <interactant intactId="EBI-12808018">
        <id>Q9UKG4</id>
        <label>SLC13A4</label>
    </interactant>
    <organismsDiffer>false</organismsDiffer>
    <experiments>3</experiments>
</comment>
<comment type="interaction">
    <interactant intactId="EBI-3953638">
        <id>P27352</id>
    </interactant>
    <interactant intactId="EBI-12081840">
        <id>A1A5C7-2</id>
        <label>SLC22A23</label>
    </interactant>
    <organismsDiffer>false</organismsDiffer>
    <experiments>3</experiments>
</comment>
<comment type="interaction">
    <interactant intactId="EBI-3953638">
        <id>P27352</id>
    </interactant>
    <interactant intactId="EBI-4289564">
        <id>P30825</id>
        <label>SLC7A1</label>
    </interactant>
    <organismsDiffer>false</organismsDiffer>
    <experiments>3</experiments>
</comment>
<comment type="interaction">
    <interactant intactId="EBI-3953638">
        <id>P27352</id>
    </interactant>
    <interactant intactId="EBI-5235586">
        <id>Q8TBB6</id>
        <label>SLC7A14</label>
    </interactant>
    <organismsDiffer>false</organismsDiffer>
    <experiments>3</experiments>
</comment>
<comment type="interaction">
    <interactant intactId="EBI-3953638">
        <id>P27352</id>
    </interactant>
    <interactant intactId="EBI-10982110">
        <id>Q96Q45-2</id>
        <label>TMEM237</label>
    </interactant>
    <organismsDiffer>false</organismsDiffer>
    <experiments>3</experiments>
</comment>
<comment type="subcellular location">
    <subcellularLocation>
        <location>Secreted</location>
    </subcellularLocation>
</comment>
<comment type="alternative products">
    <event type="alternative splicing"/>
    <isoform>
        <id>P27352-1</id>
        <name>1</name>
        <sequence type="displayed"/>
    </isoform>
    <isoform>
        <id>P27352-2</id>
        <name>2</name>
        <sequence type="described" ref="VSP_041585"/>
    </isoform>
</comment>
<comment type="tissue specificity">
    <text>Gastric mucosa.</text>
</comment>
<comment type="disease" evidence="4">
    <disease id="DI-01720">
        <name>Hereditary intrinsic factor deficiency</name>
        <acronym>IFD</acronym>
        <description>Autosomal recessive disorder characterized by megaloblastic anemia.</description>
        <dbReference type="MIM" id="261000"/>
    </disease>
    <text>The disease is caused by variants affecting the gene represented in this entry.</text>
</comment>
<comment type="similarity">
    <text evidence="9">Belongs to the eukaryotic cobalamin transport proteins family.</text>
</comment>
<comment type="online information" name="Wikipedia">
    <link uri="https://en.wikipedia.org/wiki/Intrinsic_factor"/>
    <text>Intrinsic factor entry</text>
</comment>
<feature type="signal peptide" evidence="2">
    <location>
        <begin position="1"/>
        <end position="18"/>
    </location>
</feature>
<feature type="chain" id="PRO_0000005558" description="Cobalamin binding intrinsic factor">
    <location>
        <begin position="19"/>
        <end position="417"/>
    </location>
</feature>
<feature type="binding site" evidence="5 6">
    <location>
        <position position="171"/>
    </location>
    <ligand>
        <name>cob(II)alamin</name>
        <dbReference type="ChEBI" id="CHEBI:16304"/>
    </ligand>
</feature>
<feature type="binding site" evidence="5 6">
    <location>
        <position position="222"/>
    </location>
    <ligand>
        <name>cob(II)alamin</name>
        <dbReference type="ChEBI" id="CHEBI:16304"/>
    </ligand>
</feature>
<feature type="binding site" evidence="5 6">
    <location>
        <position position="270"/>
    </location>
    <ligand>
        <name>cob(II)alamin</name>
        <dbReference type="ChEBI" id="CHEBI:16304"/>
    </ligand>
</feature>
<feature type="binding site">
    <location>
        <begin position="365"/>
        <end position="370"/>
    </location>
    <ligand>
        <name>cob(II)alamin</name>
        <dbReference type="ChEBI" id="CHEBI:16304"/>
    </ligand>
</feature>
<feature type="binding site">
    <location>
        <begin position="386"/>
        <end position="395"/>
    </location>
    <ligand>
        <name>cob(II)alamin</name>
        <dbReference type="ChEBI" id="CHEBI:16304"/>
    </ligand>
</feature>
<feature type="modified residue" description="Phosphoserine" evidence="1">
    <location>
        <position position="191"/>
    </location>
</feature>
<feature type="glycosylation site" description="N-linked (GlcNAc...) asparagine" evidence="6">
    <location>
        <position position="311"/>
    </location>
</feature>
<feature type="glycosylation site" description="N-linked (GlcNAc...) asparagine" evidence="2">
    <location>
        <position position="330"/>
    </location>
</feature>
<feature type="glycosylation site" description="N-linked (GlcNAc...) asparagine" evidence="2">
    <location>
        <position position="334"/>
    </location>
</feature>
<feature type="glycosylation site" description="N-linked (GlcNAc...) asparagine" evidence="5 6">
    <location>
        <position position="413"/>
    </location>
</feature>
<feature type="disulfide bond">
    <location>
        <begin position="26"/>
        <end position="246"/>
    </location>
</feature>
<feature type="disulfide bond">
    <location>
        <begin position="103"/>
        <end position="288"/>
    </location>
</feature>
<feature type="disulfide bond">
    <location>
        <begin position="143"/>
        <end position="182"/>
    </location>
</feature>
<feature type="splice variant" id="VSP_041585" description="In isoform 2." evidence="7">
    <original>MAWFALYLLSLLWATAGTSTQTQSSCS</original>
    <variation>MA</variation>
    <location>
        <begin position="1"/>
        <end position="27"/>
    </location>
</feature>
<feature type="sequence variant" id="VAR_022742" description="In dbSNP:rs35211634." evidence="3 4">
    <original>Q</original>
    <variation>R</variation>
    <location>
        <position position="23"/>
    </location>
</feature>
<feature type="sequence variant" id="VAR_022743" description="In IFD; dbSNP:rs121434322." evidence="4">
    <original>S</original>
    <variation>L</variation>
    <location>
        <position position="46"/>
    </location>
</feature>
<feature type="sequence variant" id="VAR_048753" description="In dbSNP:rs11825834.">
    <original>G</original>
    <variation>R</variation>
    <location>
        <position position="65"/>
    </location>
</feature>
<feature type="sequence variant" id="VAR_022744" description="In dbSNP:rs35867471." evidence="4">
    <original>N</original>
    <variation>S</variation>
    <location>
        <position position="255"/>
    </location>
</feature>
<feature type="sequence conflict" description="In Ref. 3; BAG36935." evidence="9" ref="3">
    <original>L</original>
    <variation>P</variation>
    <location>
        <position position="11"/>
    </location>
</feature>
<feature type="sequence conflict" description="In Ref. 1; AAA66354." evidence="9" ref="1">
    <original>Q</original>
    <variation>H</variation>
    <location>
        <position position="91"/>
    </location>
</feature>
<feature type="sequence conflict" description="In Ref. 3; BAG62853." evidence="9" ref="3">
    <original>I</original>
    <variation>V</variation>
    <location>
        <position position="96"/>
    </location>
</feature>
<feature type="sequence conflict" description="In Ref. 3; BAG36935." evidence="9" ref="3">
    <original>N</original>
    <variation>D</variation>
    <location>
        <position position="264"/>
    </location>
</feature>
<feature type="turn" evidence="14">
    <location>
        <begin position="30"/>
        <end position="32"/>
    </location>
</feature>
<feature type="helix" evidence="13">
    <location>
        <begin position="33"/>
        <end position="44"/>
    </location>
</feature>
<feature type="strand" evidence="13">
    <location>
        <begin position="49"/>
        <end position="51"/>
    </location>
</feature>
<feature type="helix" evidence="13">
    <location>
        <begin position="55"/>
        <end position="64"/>
    </location>
</feature>
<feature type="helix" evidence="13">
    <location>
        <begin position="69"/>
        <end position="80"/>
    </location>
</feature>
<feature type="helix" evidence="13">
    <location>
        <begin position="84"/>
        <end position="86"/>
    </location>
</feature>
<feature type="helix" evidence="13">
    <location>
        <begin position="89"/>
        <end position="101"/>
    </location>
</feature>
<feature type="helix" evidence="13">
    <location>
        <begin position="108"/>
        <end position="118"/>
    </location>
</feature>
<feature type="helix" evidence="13">
    <location>
        <begin position="129"/>
        <end position="132"/>
    </location>
</feature>
<feature type="helix" evidence="13">
    <location>
        <begin position="133"/>
        <end position="145"/>
    </location>
</feature>
<feature type="helix" evidence="13">
    <location>
        <begin position="147"/>
        <end position="163"/>
    </location>
</feature>
<feature type="helix" evidence="13">
    <location>
        <begin position="170"/>
        <end position="184"/>
    </location>
</feature>
<feature type="helix" evidence="13">
    <location>
        <begin position="195"/>
        <end position="210"/>
    </location>
</feature>
<feature type="strand" evidence="13">
    <location>
        <begin position="220"/>
        <end position="222"/>
    </location>
</feature>
<feature type="helix" evidence="13">
    <location>
        <begin position="223"/>
        <end position="235"/>
    </location>
</feature>
<feature type="helix" evidence="13">
    <location>
        <begin position="246"/>
        <end position="257"/>
    </location>
</feature>
<feature type="turn" evidence="13">
    <location>
        <begin position="258"/>
        <end position="262"/>
    </location>
</feature>
<feature type="helix" evidence="13">
    <location>
        <begin position="265"/>
        <end position="275"/>
    </location>
</feature>
<feature type="helix" evidence="13">
    <location>
        <begin position="280"/>
        <end position="285"/>
    </location>
</feature>
<feature type="strand" evidence="13">
    <location>
        <begin position="311"/>
        <end position="319"/>
    </location>
</feature>
<feature type="strand" evidence="13">
    <location>
        <begin position="333"/>
        <end position="339"/>
    </location>
</feature>
<feature type="helix" evidence="13">
    <location>
        <begin position="343"/>
        <end position="352"/>
    </location>
</feature>
<feature type="helix" evidence="14">
    <location>
        <begin position="355"/>
        <end position="357"/>
    </location>
</feature>
<feature type="strand" evidence="13">
    <location>
        <begin position="359"/>
        <end position="364"/>
    </location>
</feature>
<feature type="strand" evidence="13">
    <location>
        <begin position="367"/>
        <end position="375"/>
    </location>
</feature>
<feature type="helix" evidence="13">
    <location>
        <begin position="380"/>
        <end position="382"/>
    </location>
</feature>
<feature type="strand" evidence="13">
    <location>
        <begin position="384"/>
        <end position="390"/>
    </location>
</feature>
<feature type="turn" evidence="13">
    <location>
        <begin position="399"/>
        <end position="401"/>
    </location>
</feature>
<feature type="strand" evidence="13">
    <location>
        <begin position="409"/>
        <end position="416"/>
    </location>
</feature>
<reference key="1">
    <citation type="journal article" date="1991" name="Genomics">
        <title>Human gastric intrinsic factor: characterization of cDNA and genomic clones and localization to human chromosome 11.</title>
        <authorList>
            <person name="Hewitt J.E."/>
            <person name="Gordon M.M."/>
            <person name="Taggart R.T."/>
            <person name="Mohandas T.K."/>
            <person name="Alpers D.H."/>
        </authorList>
    </citation>
    <scope>NUCLEOTIDE SEQUENCE [MRNA] (ISOFORM 1)</scope>
</reference>
<reference key="2">
    <citation type="submission" date="1994-04" db="EMBL/GenBank/DDBJ databases">
        <title>A cDNA sequence of the human intrinsic factor.</title>
        <authorList>
            <person name="Hannappel M."/>
            <person name="Kehl M."/>
            <person name="Winnacker E.L."/>
        </authorList>
    </citation>
    <scope>NUCLEOTIDE SEQUENCE [MRNA] (ISOFORM 1)</scope>
    <source>
        <tissue>Stomach</tissue>
    </source>
</reference>
<reference key="3">
    <citation type="journal article" date="2004" name="Nat. Genet.">
        <title>Complete sequencing and characterization of 21,243 full-length human cDNAs.</title>
        <authorList>
            <person name="Ota T."/>
            <person name="Suzuki Y."/>
            <person name="Nishikawa T."/>
            <person name="Otsuki T."/>
            <person name="Sugiyama T."/>
            <person name="Irie R."/>
            <person name="Wakamatsu A."/>
            <person name="Hayashi K."/>
            <person name="Sato H."/>
            <person name="Nagai K."/>
            <person name="Kimura K."/>
            <person name="Makita H."/>
            <person name="Sekine M."/>
            <person name="Obayashi M."/>
            <person name="Nishi T."/>
            <person name="Shibahara T."/>
            <person name="Tanaka T."/>
            <person name="Ishii S."/>
            <person name="Yamamoto J."/>
            <person name="Saito K."/>
            <person name="Kawai Y."/>
            <person name="Isono Y."/>
            <person name="Nakamura Y."/>
            <person name="Nagahari K."/>
            <person name="Murakami K."/>
            <person name="Yasuda T."/>
            <person name="Iwayanagi T."/>
            <person name="Wagatsuma M."/>
            <person name="Shiratori A."/>
            <person name="Sudo H."/>
            <person name="Hosoiri T."/>
            <person name="Kaku Y."/>
            <person name="Kodaira H."/>
            <person name="Kondo H."/>
            <person name="Sugawara M."/>
            <person name="Takahashi M."/>
            <person name="Kanda K."/>
            <person name="Yokoi T."/>
            <person name="Furuya T."/>
            <person name="Kikkawa E."/>
            <person name="Omura Y."/>
            <person name="Abe K."/>
            <person name="Kamihara K."/>
            <person name="Katsuta N."/>
            <person name="Sato K."/>
            <person name="Tanikawa M."/>
            <person name="Yamazaki M."/>
            <person name="Ninomiya K."/>
            <person name="Ishibashi T."/>
            <person name="Yamashita H."/>
            <person name="Murakawa K."/>
            <person name="Fujimori K."/>
            <person name="Tanai H."/>
            <person name="Kimata M."/>
            <person name="Watanabe M."/>
            <person name="Hiraoka S."/>
            <person name="Chiba Y."/>
            <person name="Ishida S."/>
            <person name="Ono Y."/>
            <person name="Takiguchi S."/>
            <person name="Watanabe S."/>
            <person name="Yosida M."/>
            <person name="Hotuta T."/>
            <person name="Kusano J."/>
            <person name="Kanehori K."/>
            <person name="Takahashi-Fujii A."/>
            <person name="Hara H."/>
            <person name="Tanase T.-O."/>
            <person name="Nomura Y."/>
            <person name="Togiya S."/>
            <person name="Komai F."/>
            <person name="Hara R."/>
            <person name="Takeuchi K."/>
            <person name="Arita M."/>
            <person name="Imose N."/>
            <person name="Musashino K."/>
            <person name="Yuuki H."/>
            <person name="Oshima A."/>
            <person name="Sasaki N."/>
            <person name="Aotsuka S."/>
            <person name="Yoshikawa Y."/>
            <person name="Matsunawa H."/>
            <person name="Ichihara T."/>
            <person name="Shiohata N."/>
            <person name="Sano S."/>
            <person name="Moriya S."/>
            <person name="Momiyama H."/>
            <person name="Satoh N."/>
            <person name="Takami S."/>
            <person name="Terashima Y."/>
            <person name="Suzuki O."/>
            <person name="Nakagawa S."/>
            <person name="Senoh A."/>
            <person name="Mizoguchi H."/>
            <person name="Goto Y."/>
            <person name="Shimizu F."/>
            <person name="Wakebe H."/>
            <person name="Hishigaki H."/>
            <person name="Watanabe T."/>
            <person name="Sugiyama A."/>
            <person name="Takemoto M."/>
            <person name="Kawakami B."/>
            <person name="Yamazaki M."/>
            <person name="Watanabe K."/>
            <person name="Kumagai A."/>
            <person name="Itakura S."/>
            <person name="Fukuzumi Y."/>
            <person name="Fujimori Y."/>
            <person name="Komiyama M."/>
            <person name="Tashiro H."/>
            <person name="Tanigami A."/>
            <person name="Fujiwara T."/>
            <person name="Ono T."/>
            <person name="Yamada K."/>
            <person name="Fujii Y."/>
            <person name="Ozaki K."/>
            <person name="Hirao M."/>
            <person name="Ohmori Y."/>
            <person name="Kawabata A."/>
            <person name="Hikiji T."/>
            <person name="Kobatake N."/>
            <person name="Inagaki H."/>
            <person name="Ikema Y."/>
            <person name="Okamoto S."/>
            <person name="Okitani R."/>
            <person name="Kawakami T."/>
            <person name="Noguchi S."/>
            <person name="Itoh T."/>
            <person name="Shigeta K."/>
            <person name="Senba T."/>
            <person name="Matsumura K."/>
            <person name="Nakajima Y."/>
            <person name="Mizuno T."/>
            <person name="Morinaga M."/>
            <person name="Sasaki M."/>
            <person name="Togashi T."/>
            <person name="Oyama M."/>
            <person name="Hata H."/>
            <person name="Watanabe M."/>
            <person name="Komatsu T."/>
            <person name="Mizushima-Sugano J."/>
            <person name="Satoh T."/>
            <person name="Shirai Y."/>
            <person name="Takahashi Y."/>
            <person name="Nakagawa K."/>
            <person name="Okumura K."/>
            <person name="Nagase T."/>
            <person name="Nomura N."/>
            <person name="Kikuchi H."/>
            <person name="Masuho Y."/>
            <person name="Yamashita R."/>
            <person name="Nakai K."/>
            <person name="Yada T."/>
            <person name="Nakamura Y."/>
            <person name="Ohara O."/>
            <person name="Isogai T."/>
            <person name="Sugano S."/>
        </authorList>
    </citation>
    <scope>NUCLEOTIDE SEQUENCE [LARGE SCALE MRNA] (ISOFORMS 1 AND 2)</scope>
    <source>
        <tissue>Stomach</tissue>
    </source>
</reference>
<reference key="4">
    <citation type="journal article" date="2006" name="Nature">
        <title>Human chromosome 11 DNA sequence and analysis including novel gene identification.</title>
        <authorList>
            <person name="Taylor T.D."/>
            <person name="Noguchi H."/>
            <person name="Totoki Y."/>
            <person name="Toyoda A."/>
            <person name="Kuroki Y."/>
            <person name="Dewar K."/>
            <person name="Lloyd C."/>
            <person name="Itoh T."/>
            <person name="Takeda T."/>
            <person name="Kim D.-W."/>
            <person name="She X."/>
            <person name="Barlow K.F."/>
            <person name="Bloom T."/>
            <person name="Bruford E."/>
            <person name="Chang J.L."/>
            <person name="Cuomo C.A."/>
            <person name="Eichler E."/>
            <person name="FitzGerald M.G."/>
            <person name="Jaffe D.B."/>
            <person name="LaButti K."/>
            <person name="Nicol R."/>
            <person name="Park H.-S."/>
            <person name="Seaman C."/>
            <person name="Sougnez C."/>
            <person name="Yang X."/>
            <person name="Zimmer A.R."/>
            <person name="Zody M.C."/>
            <person name="Birren B.W."/>
            <person name="Nusbaum C."/>
            <person name="Fujiyama A."/>
            <person name="Hattori M."/>
            <person name="Rogers J."/>
            <person name="Lander E.S."/>
            <person name="Sakaki Y."/>
        </authorList>
    </citation>
    <scope>NUCLEOTIDE SEQUENCE [LARGE SCALE GENOMIC DNA]</scope>
</reference>
<reference key="5">
    <citation type="journal article" date="2004" name="Genome Res.">
        <title>The status, quality, and expansion of the NIH full-length cDNA project: the Mammalian Gene Collection (MGC).</title>
        <authorList>
            <consortium name="The MGC Project Team"/>
        </authorList>
    </citation>
    <scope>NUCLEOTIDE SEQUENCE [LARGE SCALE MRNA] (ISOFORM 1)</scope>
    <source>
        <tissue>Colon</tissue>
    </source>
</reference>
<reference evidence="11" key="6">
    <citation type="journal article" date="2007" name="Proc. Natl. Acad. Sci. U.S.A.">
        <title>Crystal structure of human intrinsic factor: cobalamin complex at 2.6-A resolution.</title>
        <authorList>
            <person name="Mathews F.S."/>
            <person name="Gordon M.M."/>
            <person name="Chen Z."/>
            <person name="Rajashankar K.R."/>
            <person name="Ealick S.E."/>
            <person name="Alpers D.H."/>
            <person name="Sukumar N."/>
        </authorList>
    </citation>
    <scope>X-RAY CRYSTALLOGRAPHY (2.6 ANGSTROMS) OF 19-417 IN COMPLEX WITH COBALAMIN</scope>
    <scope>DISULFIDE BONDS</scope>
    <scope>GLYCOSYLATION AT ASN-413</scope>
</reference>
<reference evidence="12" key="7">
    <citation type="journal article" date="2010" name="Nature">
        <title>Structural basis for receptor recognition of vitamin-B(12)-intrinsic factor complexes.</title>
        <authorList>
            <person name="Andersen C.B."/>
            <person name="Madsen M."/>
            <person name="Storm T."/>
            <person name="Moestrup S.K."/>
            <person name="Andersen G.R."/>
        </authorList>
    </citation>
    <scope>X-RAY CRYSTALLOGRAPHY (3.3 ANGSTROMS) OF 25-417 IN COMPLEX WITH COBALAMIN AND CUBN</scope>
    <scope>INTERACTION WITH CUBN</scope>
    <scope>DISULFIDE BONDS</scope>
    <scope>GLYCOSYLATION AT ASN-311 AND ASN-413</scope>
</reference>
<reference key="8">
    <citation type="journal article" date="2004" name="Hum. Mutat.">
        <title>A genetic polymorphism in the coding region of the gastric intrinsic factor gene (GIF) is associated with congenital intrinsic factor deficiency.</title>
        <authorList>
            <person name="Gordon M.M."/>
            <person name="Brada N."/>
            <person name="Remacha A."/>
            <person name="Badell I."/>
            <person name="del Rio E."/>
            <person name="Baiget M."/>
            <person name="Santer R."/>
            <person name="Quadros E.V."/>
            <person name="Rothenberg S.P."/>
            <person name="Alpers D.H."/>
        </authorList>
    </citation>
    <scope>VARIANT ARG-23</scope>
</reference>
<reference key="9">
    <citation type="journal article" date="2005" name="Proc. Natl. Acad. Sci. U.S.A.">
        <title>Hereditary juvenile cobalamin deficiency caused by mutations in the intrinsic factor gene.</title>
        <authorList>
            <person name="Tanner S.M."/>
            <person name="Li Z."/>
            <person name="Perko J.D."/>
            <person name="Oener C."/>
            <person name="Cetin M."/>
            <person name="Altay C."/>
            <person name="Yurtsever Z."/>
            <person name="David K.L."/>
            <person name="Faivre L."/>
            <person name="Ismail E.A."/>
            <person name="Graesbeck R."/>
            <person name="de la Chapelle A."/>
        </authorList>
    </citation>
    <scope>VARIANT IFD LEU-46</scope>
    <scope>VARIANTS ARG-23 AND SER-255</scope>
</reference>
<name>IF_HUMAN</name>
<evidence type="ECO:0000250" key="1">
    <source>
        <dbReference type="UniProtKB" id="P17267"/>
    </source>
</evidence>
<evidence type="ECO:0000255" key="2"/>
<evidence type="ECO:0000269" key="3">
    <source>
    </source>
</evidence>
<evidence type="ECO:0000269" key="4">
    <source>
    </source>
</evidence>
<evidence type="ECO:0000269" key="5">
    <source>
    </source>
</evidence>
<evidence type="ECO:0000269" key="6">
    <source>
    </source>
</evidence>
<evidence type="ECO:0000303" key="7">
    <source>
    </source>
</evidence>
<evidence type="ECO:0000303" key="8">
    <source>
    </source>
</evidence>
<evidence type="ECO:0000305" key="9"/>
<evidence type="ECO:0000312" key="10">
    <source>
        <dbReference type="HGNC" id="HGNC:4268"/>
    </source>
</evidence>
<evidence type="ECO:0007744" key="11">
    <source>
        <dbReference type="PDB" id="2PMV"/>
    </source>
</evidence>
<evidence type="ECO:0007744" key="12">
    <source>
        <dbReference type="PDB" id="3KQ4"/>
    </source>
</evidence>
<evidence type="ECO:0007829" key="13">
    <source>
        <dbReference type="PDB" id="2PMV"/>
    </source>
</evidence>
<evidence type="ECO:0007829" key="14">
    <source>
        <dbReference type="PDB" id="3KQ4"/>
    </source>
</evidence>